<feature type="chain" id="PRO_0000208130" description="Galactose-6-phosphate isomerase subunit LacA 1">
    <location>
        <begin position="1"/>
        <end position="141"/>
    </location>
</feature>
<name>LACA1_STRP6</name>
<proteinExistence type="inferred from homology"/>
<keyword id="KW-0413">Isomerase</keyword>
<keyword id="KW-0423">Lactose metabolism</keyword>
<organism>
    <name type="scientific">Streptococcus pyogenes serotype M6 (strain ATCC BAA-946 / MGAS10394)</name>
    <dbReference type="NCBI Taxonomy" id="286636"/>
    <lineage>
        <taxon>Bacteria</taxon>
        <taxon>Bacillati</taxon>
        <taxon>Bacillota</taxon>
        <taxon>Bacilli</taxon>
        <taxon>Lactobacillales</taxon>
        <taxon>Streptococcaceae</taxon>
        <taxon>Streptococcus</taxon>
    </lineage>
</organism>
<accession>Q5XAI1</accession>
<sequence>MAIILGADAHGNALKELIKSFLQEEGYDIIDVTDINSDFIDNTLAVAKAINEAEGRLGIMVDAYGAGPFMVATKLKGMVAAEVSDERSAYMTRGHNNARMITIGAEIVGPELAKNIVKGFVTGPYDGGRHQIRVDMLNKMA</sequence>
<gene>
    <name evidence="1" type="primary">lacA1</name>
    <name type="ordered locus">M6_Spy1447</name>
</gene>
<reference key="1">
    <citation type="journal article" date="2004" name="J. Infect. Dis.">
        <title>Progress toward characterization of the group A Streptococcus metagenome: complete genome sequence of a macrolide-resistant serotype M6 strain.</title>
        <authorList>
            <person name="Banks D.J."/>
            <person name="Porcella S.F."/>
            <person name="Barbian K.D."/>
            <person name="Beres S.B."/>
            <person name="Philips L.E."/>
            <person name="Voyich J.M."/>
            <person name="DeLeo F.R."/>
            <person name="Martin J.M."/>
            <person name="Somerville G.A."/>
            <person name="Musser J.M."/>
        </authorList>
    </citation>
    <scope>NUCLEOTIDE SEQUENCE [LARGE SCALE GENOMIC DNA]</scope>
    <source>
        <strain>ATCC BAA-946 / MGAS10394</strain>
    </source>
</reference>
<protein>
    <recommendedName>
        <fullName evidence="1">Galactose-6-phosphate isomerase subunit LacA 1</fullName>
        <ecNumber evidence="1">5.3.1.26</ecNumber>
    </recommendedName>
</protein>
<dbReference type="EC" id="5.3.1.26" evidence="1"/>
<dbReference type="EMBL" id="CP000003">
    <property type="protein sequence ID" value="AAT87582.1"/>
    <property type="molecule type" value="Genomic_DNA"/>
</dbReference>
<dbReference type="SMR" id="Q5XAI1"/>
<dbReference type="KEGG" id="spa:M6_Spy1447"/>
<dbReference type="HOGENOM" id="CLU_091396_4_2_9"/>
<dbReference type="UniPathway" id="UPA00702">
    <property type="reaction ID" value="UER00714"/>
</dbReference>
<dbReference type="Proteomes" id="UP000001167">
    <property type="component" value="Chromosome"/>
</dbReference>
<dbReference type="GO" id="GO:0050044">
    <property type="term" value="F:galactose-6-phosphate isomerase activity"/>
    <property type="evidence" value="ECO:0007669"/>
    <property type="project" value="UniProtKB-UniRule"/>
</dbReference>
<dbReference type="GO" id="GO:0004751">
    <property type="term" value="F:ribose-5-phosphate isomerase activity"/>
    <property type="evidence" value="ECO:0007669"/>
    <property type="project" value="TreeGrafter"/>
</dbReference>
<dbReference type="GO" id="GO:0019316">
    <property type="term" value="P:D-allose catabolic process"/>
    <property type="evidence" value="ECO:0007669"/>
    <property type="project" value="TreeGrafter"/>
</dbReference>
<dbReference type="GO" id="GO:0019388">
    <property type="term" value="P:galactose catabolic process"/>
    <property type="evidence" value="ECO:0007669"/>
    <property type="project" value="UniProtKB-UniPathway"/>
</dbReference>
<dbReference type="GO" id="GO:0019512">
    <property type="term" value="P:lactose catabolic process via tagatose-6-phosphate"/>
    <property type="evidence" value="ECO:0007669"/>
    <property type="project" value="UniProtKB-UniRule"/>
</dbReference>
<dbReference type="GO" id="GO:0009052">
    <property type="term" value="P:pentose-phosphate shunt, non-oxidative branch"/>
    <property type="evidence" value="ECO:0007669"/>
    <property type="project" value="TreeGrafter"/>
</dbReference>
<dbReference type="Gene3D" id="3.40.1400.10">
    <property type="entry name" value="Sugar-phosphate isomerase, RpiB/LacA/LacB"/>
    <property type="match status" value="1"/>
</dbReference>
<dbReference type="HAMAP" id="MF_01555">
    <property type="entry name" value="LacA"/>
    <property type="match status" value="1"/>
</dbReference>
<dbReference type="InterPro" id="IPR004783">
    <property type="entry name" value="LacA"/>
</dbReference>
<dbReference type="InterPro" id="IPR003500">
    <property type="entry name" value="RpiB_LacA_LacB"/>
</dbReference>
<dbReference type="InterPro" id="IPR036569">
    <property type="entry name" value="RpiB_LacA_LacB_sf"/>
</dbReference>
<dbReference type="NCBIfam" id="TIGR01118">
    <property type="entry name" value="lacA"/>
    <property type="match status" value="1"/>
</dbReference>
<dbReference type="NCBIfam" id="NF006380">
    <property type="entry name" value="PRK08621.1"/>
    <property type="match status" value="1"/>
</dbReference>
<dbReference type="NCBIfam" id="NF009257">
    <property type="entry name" value="PRK12613.1"/>
    <property type="match status" value="1"/>
</dbReference>
<dbReference type="NCBIfam" id="TIGR00689">
    <property type="entry name" value="rpiB_lacA_lacB"/>
    <property type="match status" value="1"/>
</dbReference>
<dbReference type="PANTHER" id="PTHR30345:SF5">
    <property type="entry name" value="GALACTOSE-6-PHOSPHATE ISOMERASE SUBUNIT LACA"/>
    <property type="match status" value="1"/>
</dbReference>
<dbReference type="PANTHER" id="PTHR30345">
    <property type="entry name" value="RIBOSE-5-PHOSPHATE ISOMERASE B"/>
    <property type="match status" value="1"/>
</dbReference>
<dbReference type="Pfam" id="PF02502">
    <property type="entry name" value="LacAB_rpiB"/>
    <property type="match status" value="1"/>
</dbReference>
<dbReference type="PIRSF" id="PIRSF005384">
    <property type="entry name" value="RpiB_LacA_B"/>
    <property type="match status" value="1"/>
</dbReference>
<dbReference type="SUPFAM" id="SSF89623">
    <property type="entry name" value="Ribose/Galactose isomerase RpiB/AlsB"/>
    <property type="match status" value="1"/>
</dbReference>
<comment type="catalytic activity">
    <reaction evidence="1">
        <text>aldehydo-D-galactose 6-phosphate = keto-D-tagatose 6-phosphate</text>
        <dbReference type="Rhea" id="RHEA:13033"/>
        <dbReference type="ChEBI" id="CHEBI:58255"/>
        <dbReference type="ChEBI" id="CHEBI:134283"/>
        <dbReference type="EC" id="5.3.1.26"/>
    </reaction>
</comment>
<comment type="pathway">
    <text evidence="1">Carbohydrate metabolism; D-galactose 6-phosphate degradation; D-tagatose 6-phosphate from D-galactose 6-phosphate: step 1/1.</text>
</comment>
<comment type="subunit">
    <text evidence="1">Heteromultimeric protein consisting of LacA and LacB.</text>
</comment>
<comment type="similarity">
    <text evidence="1">Belongs to the LacAB/RpiB family.</text>
</comment>
<evidence type="ECO:0000255" key="1">
    <source>
        <dbReference type="HAMAP-Rule" id="MF_01555"/>
    </source>
</evidence>